<proteinExistence type="inferred from homology"/>
<organismHost>
    <name type="scientific">Homo sapiens</name>
    <name type="common">Human</name>
    <dbReference type="NCBI Taxonomy" id="9606"/>
</organismHost>
<reference key="1">
    <citation type="journal article" date="2008" name="J. Virol.">
        <title>Full genome-based classification of rotaviruses reveals a common origin between human Wa-Like and porcine rotavirus strains and human DS-1-like and bovine rotavirus strains.</title>
        <authorList>
            <person name="Matthijnssens J."/>
            <person name="Ciarlet M."/>
            <person name="Heiman E.M."/>
            <person name="Arijs I."/>
            <person name="Delbeke T."/>
            <person name="McDonald S.M."/>
            <person name="Palombo E.A."/>
            <person name="Iturriza-Gomara M."/>
            <person name="Maes P."/>
            <person name="Patton J.T."/>
            <person name="Rahman M."/>
            <person name="Van Ranst M."/>
        </authorList>
    </citation>
    <scope>NUCLEOTIDE SEQUENCE [GENOMIC RNA]</scope>
</reference>
<comment type="function">
    <text evidence="1">Inner capsid protein that self-assembles to form an icosahedral capsid with a T=2 symmetry, which consists of 120 copies of VP2, with channels at each of its five-fold vertices. This capsid constitutes the innermost concentric layer of the viral mature particle. It encapsidates the polymerase VP1, the capping enzyme VP3 and the genomic dsRNA, thereby defining the core. The innermost VP2 capsid and the intermediate VP6 capsid remain intact following cell entry to protect the dsRNA from degradation and to prevent unfavorable antiviral responses in the host cell during all the replication cycle of the virus. Nascent transcripts are transcribed within the structural confines of this double-layered particle (DLP) and are extruded through the channels formed by VP2 N-termini. VP2 is required for the replicase activity of VP1 polymerase. Probably recruits a copy of a VP1-VP3 complex, potentially along with a segment of plus-strand RNA, as a decamer of VP2 assembles. May activate the autoinhibited VP1/RNA complex to coordinate packaging and genome replication.</text>
</comment>
<comment type="subunit">
    <text evidence="1">Homodecamer; each decamer is made up of two conformers of VP2, called VP2A and VP2B. Interacts with a VP1-VP3 complex. Interacts with the intermediate capsid protein VP6. Interacts with NSP5. Interacts (via N-terminus) with NSP2.</text>
</comment>
<comment type="subcellular location">
    <subcellularLocation>
        <location evidence="1">Virion</location>
    </subcellularLocation>
    <text evidence="1">Inner capsid protein. Also found in spherical cytoplasmic structures, called virus factories, that appear early after infection and are the site of viral replication and packaging.</text>
</comment>
<comment type="domain">
    <text evidence="1">The N-terminus binds RNA. It is necessary for encapsidation of VP1 and VP3. The N-termini of 10 VP2 molecules form a cylindrical hub underneath each 5-fold axis of the inner capsid.</text>
</comment>
<comment type="PTM">
    <text evidence="1">Sumoylated with SUMO1 and SUMO2. Sumoylation of viral proteins seems to have a positive role on viral replication.</text>
</comment>
<comment type="similarity">
    <text evidence="1">Belongs to the rotavirus VP2 family.</text>
</comment>
<dbReference type="EMBL" id="EF583014">
    <property type="protein sequence ID" value="ABU87823.1"/>
    <property type="molecule type" value="Genomic_RNA"/>
</dbReference>
<dbReference type="SMR" id="B1NKQ6"/>
<dbReference type="Proteomes" id="UP000001455">
    <property type="component" value="Genome"/>
</dbReference>
<dbReference type="GO" id="GO:0039616">
    <property type="term" value="C:T=2 icosahedral viral capsid"/>
    <property type="evidence" value="ECO:0007669"/>
    <property type="project" value="UniProtKB-UniRule"/>
</dbReference>
<dbReference type="GO" id="GO:0039625">
    <property type="term" value="C:viral inner capsid"/>
    <property type="evidence" value="ECO:0007669"/>
    <property type="project" value="UniProtKB-UniRule"/>
</dbReference>
<dbReference type="GO" id="GO:0019013">
    <property type="term" value="C:viral nucleocapsid"/>
    <property type="evidence" value="ECO:0007669"/>
    <property type="project" value="UniProtKB-UniRule"/>
</dbReference>
<dbReference type="GO" id="GO:0003723">
    <property type="term" value="F:RNA binding"/>
    <property type="evidence" value="ECO:0007669"/>
    <property type="project" value="UniProtKB-UniRule"/>
</dbReference>
<dbReference type="HAMAP" id="MF_04123">
    <property type="entry name" value="Rota_VP2"/>
    <property type="match status" value="1"/>
</dbReference>
<dbReference type="HAMAP" id="MF_04127">
    <property type="entry name" value="Rota_VP2_A"/>
    <property type="match status" value="1"/>
</dbReference>
<dbReference type="InterPro" id="IPR007779">
    <property type="entry name" value="Rotavirus_VP2"/>
</dbReference>
<dbReference type="Pfam" id="PF05087">
    <property type="entry name" value="Rota_VP2"/>
    <property type="match status" value="1"/>
</dbReference>
<accession>B1NKQ6</accession>
<organism>
    <name type="scientific">Rotavirus A (strain RVA/Human/Indonesia/69M/1980/G8P4[10])</name>
    <name type="common">RV-A</name>
    <dbReference type="NCBI Taxonomy" id="10947"/>
    <lineage>
        <taxon>Viruses</taxon>
        <taxon>Riboviria</taxon>
        <taxon>Orthornavirae</taxon>
        <taxon>Duplornaviricota</taxon>
        <taxon>Resentoviricetes</taxon>
        <taxon>Reovirales</taxon>
        <taxon>Sedoreoviridae</taxon>
        <taxon>Rotavirus</taxon>
        <taxon>Rotavirus A</taxon>
    </lineage>
</organism>
<protein>
    <recommendedName>
        <fullName evidence="1">Inner capsid protein VP2</fullName>
    </recommendedName>
</protein>
<evidence type="ECO:0000255" key="1">
    <source>
        <dbReference type="HAMAP-Rule" id="MF_04127"/>
    </source>
</evidence>
<evidence type="ECO:0000256" key="2">
    <source>
        <dbReference type="SAM" id="MobiDB-lite"/>
    </source>
</evidence>
<feature type="chain" id="PRO_0000368055" description="Inner capsid protein VP2">
    <location>
        <begin position="1"/>
        <end position="880"/>
    </location>
</feature>
<feature type="region of interest" description="5-fold hub; involved in the encapsidation of VP1 and VP3" evidence="1">
    <location>
        <begin position="1"/>
        <end position="80"/>
    </location>
</feature>
<feature type="region of interest" description="Disordered" evidence="2">
    <location>
        <begin position="1"/>
        <end position="38"/>
    </location>
</feature>
<feature type="region of interest" description="Hydrophobic" evidence="1">
    <location>
        <begin position="394"/>
        <end position="414"/>
    </location>
</feature>
<feature type="region of interest" description="Hydrophobic" evidence="1">
    <location>
        <begin position="422"/>
        <end position="442"/>
    </location>
</feature>
<feature type="compositionally biased region" description="Basic and acidic residues" evidence="2">
    <location>
        <begin position="20"/>
        <end position="30"/>
    </location>
</feature>
<feature type="site" description="Interaction with the intermediate capsid protein VP6" evidence="1">
    <location>
        <position position="220"/>
    </location>
</feature>
<feature type="site" description="Interaction with the intermediate capsid protein VP6" evidence="1">
    <location>
        <position position="224"/>
    </location>
</feature>
<feature type="site" description="Interaction with the intermediate capsid protein VP6" evidence="1">
    <location>
        <position position="228"/>
    </location>
</feature>
<feature type="site" description="Interaction with the intermediate capsid protein VP6" evidence="1">
    <location>
        <position position="839"/>
    </location>
</feature>
<feature type="site" description="Interaction with the intermediate capsid protein VP6" evidence="1">
    <location>
        <position position="841"/>
    </location>
</feature>
<name>VP2_ROTH6</name>
<sequence length="880" mass="102437">MAYRKRGARREANVNNNNRMQEKDNEKQDQNNKIQLSDKVLSKKEEVITDNQEEIKIADEVKKSTKEESKQLLEVLKTKEEHQKEIQYEILQKTIPTFEPKESILKKLEDIKPEQAKKQTKLFRIFEPRQLPIYRANGEKELRNRWYWKLKKDTLPDGDYDVREYFLNLYDQVLTEMPDYLLLKDMAVENKNSRDAGKVVDSETASICDAIFQDEETEGAVRRFIAEMRQRVQADRNVVNYPSILHPIDYAFNEYFLQHQLVEPLNNDIIFNYIPERIRNDVNYILNMDRNLPSTARYIRPNLLQDRLNLHDNFESLWDTITTSNYILARSVVPDLKELVSTEAQIQKMSQDLQLEALTIQSETQFLTGINSQAANDCFKTLIAAMLSQRTMSLDFVTTNYMSLISGMWLLTVVPNDMFIRESLVACQLAIVNTIVYPAFGMQRMHYRNGDPQTPFQIAEQQTQNFQVANWLHFVNNNQFRQVVIDGVLNQVLNDNIRNGHVINQLMEALMQLSRQQFPTMPVDYKRSIQRGILLLSNRLGQLVDLTRLLAYNYETLMACITMNMQHVQTLTTEKLQLTSVTSLCMLIGNATVIPSPQTLFHYYNVNVNFHSNYNERINDAVAIITAANRLNLYQKKMKAIVEDFLKRLHIFDVARVPDDQMYRLRDRLRLLPVEVRRLDIFNLILMNMDQIERASDKIAQGVIIAYRDMQLERDEMYGYVNIARNLDGFQQINLEELMRTGDYAQITNMLLNNQPVALVGALPFITDSSVISLIAKLDATVFAQIVKLRKVDTLKPILYKINSDSNDFYLVANYDWVPTSTTKVYKQVPQQFDFRSSMHMLTSNLTFTVYSDLLAFVSADTVEPINAVAFDNMRIMNEL</sequence>
<keyword id="KW-0167">Capsid protein</keyword>
<keyword id="KW-1153">Inner capsid protein</keyword>
<keyword id="KW-0677">Repeat</keyword>
<keyword id="KW-0694">RNA-binding</keyword>
<keyword id="KW-1141">T=2 icosahedral capsid protein</keyword>
<keyword id="KW-0832">Ubl conjugation</keyword>
<keyword id="KW-0946">Virion</keyword>